<organism>
    <name type="scientific">Human cytomegalovirus (strain AD169)</name>
    <name type="common">HHV-5</name>
    <name type="synonym">Human herpesvirus 5</name>
    <dbReference type="NCBI Taxonomy" id="10360"/>
    <lineage>
        <taxon>Viruses</taxon>
        <taxon>Duplodnaviria</taxon>
        <taxon>Heunggongvirae</taxon>
        <taxon>Peploviricota</taxon>
        <taxon>Herviviricetes</taxon>
        <taxon>Herpesvirales</taxon>
        <taxon>Orthoherpesviridae</taxon>
        <taxon>Betaherpesvirinae</taxon>
        <taxon>Cytomegalovirus</taxon>
        <taxon>Cytomegalovirus humanbeta5</taxon>
        <taxon>Human cytomegalovirus</taxon>
    </lineage>
</organism>
<proteinExistence type="inferred from homology"/>
<name>UL92_HCMVA</name>
<gene>
    <name type="primary">UL92</name>
</gene>
<evidence type="ECO:0000305" key="1"/>
<comment type="similarity">
    <text evidence="1">Belongs to the herpesviridae UL92 family.</text>
</comment>
<dbReference type="EMBL" id="X17403">
    <property type="protein sequence ID" value="CAA35366.1"/>
    <property type="molecule type" value="Genomic_DNA"/>
</dbReference>
<dbReference type="EMBL" id="BK000394">
    <property type="protein sequence ID" value="DAA00189.1"/>
    <property type="molecule type" value="Genomic_DNA"/>
</dbReference>
<dbReference type="PIR" id="S09856">
    <property type="entry name" value="QQBEI8"/>
</dbReference>
<dbReference type="RefSeq" id="YP_081539.1">
    <property type="nucleotide sequence ID" value="NC_006273.2"/>
</dbReference>
<dbReference type="DNASU" id="3077564"/>
<dbReference type="GeneID" id="3077564"/>
<dbReference type="KEGG" id="vg:3077564"/>
<dbReference type="Proteomes" id="UP000008991">
    <property type="component" value="Segment"/>
</dbReference>
<dbReference type="Proteomes" id="UP000008992">
    <property type="component" value="Segment"/>
</dbReference>
<dbReference type="InterPro" id="IPR004289">
    <property type="entry name" value="Herpes_UL92"/>
</dbReference>
<dbReference type="Pfam" id="PF03048">
    <property type="entry name" value="Herpes_UL92"/>
    <property type="match status" value="1"/>
</dbReference>
<feature type="chain" id="PRO_0000116243" description="Protein UL92">
    <location>
        <begin position="1"/>
        <end position="201"/>
    </location>
</feature>
<reference key="1">
    <citation type="journal article" date="1990" name="Curr. Top. Microbiol. Immunol.">
        <title>Analysis of the protein-coding content of the sequence of human cytomegalovirus strain AD169.</title>
        <authorList>
            <person name="Chee M.S."/>
            <person name="Bankier A.T."/>
            <person name="Beck S."/>
            <person name="Bohni R."/>
            <person name="Brown C.M."/>
            <person name="Cerny R."/>
            <person name="Horsnell T."/>
            <person name="Hutchison C.A. III"/>
            <person name="Kouzarides T."/>
            <person name="Martignetti J.A."/>
            <person name="Preddie E."/>
            <person name="Satchwell S.C."/>
            <person name="Tomlinson P."/>
            <person name="Weston K.M."/>
            <person name="Barrell B.G."/>
        </authorList>
    </citation>
    <scope>NUCLEOTIDE SEQUENCE [LARGE SCALE GENOMIC DNA]</scope>
</reference>
<reference key="2">
    <citation type="journal article" date="2003" name="J. Gen. Virol.">
        <title>The human cytomegalovirus genome revisited: comparison with the chimpanzee cytomegalovirus genome.</title>
        <authorList>
            <person name="Davison A.J."/>
            <person name="Dolan A."/>
            <person name="Akter P."/>
            <person name="Addison C."/>
            <person name="Dargan D.J."/>
            <person name="Alcendor D.J."/>
            <person name="McGeoch D.J."/>
            <person name="Hayward G.S."/>
        </authorList>
    </citation>
    <scope>GENOME REANNOTATION</scope>
</reference>
<reference key="3">
    <citation type="journal article" date="2003" name="J. Gen. Virol.">
        <authorList>
            <person name="Davison A.J."/>
            <person name="Dolan A."/>
            <person name="Akter P."/>
            <person name="Addison C."/>
            <person name="Dargan D.J."/>
            <person name="Alcendor D.J."/>
            <person name="McGeoch D.J."/>
            <person name="Hayward G.S."/>
        </authorList>
    </citation>
    <scope>ERRATUM OF PUBMED:12533697</scope>
</reference>
<protein>
    <recommendedName>
        <fullName>Protein UL92</fullName>
    </recommendedName>
</protein>
<sequence length="201" mass="22511">MCDASGACDMRHVQNAFTEEIQLHSLYACTRCFRTHLCDLGSGCALVSTLEGSVCVKTGLVYEALYPVARSHLLEPIEEAALDDVNIISAVLSGVYSYLMTHAGRYADVIQEVVERDRLKKQVEDSIYFTFNKVFRSMHNVNRISVPVISQLFIQLIIGIYSKQTKYDACVIKVSRKKREDALLKQMRSEYGNAPVFGSGV</sequence>
<keyword id="KW-1185">Reference proteome</keyword>
<accession>P16798</accession>
<accession>Q7M6J9</accession>
<organismHost>
    <name type="scientific">Homo sapiens</name>
    <name type="common">Human</name>
    <dbReference type="NCBI Taxonomy" id="9606"/>
</organismHost>